<dbReference type="EC" id="3.4.17.-" evidence="2"/>
<dbReference type="EMBL" id="KJ854920">
    <property type="protein sequence ID" value="AIG55189.1"/>
    <property type="molecule type" value="Genomic_DNA"/>
</dbReference>
<dbReference type="SMR" id="A0A075TJ05"/>
<dbReference type="EnsemblFungi" id="CAK41945">
    <property type="protein sequence ID" value="CAK41945"/>
    <property type="gene ID" value="An14g02080"/>
</dbReference>
<dbReference type="VEuPathDB" id="FungiDB:An14g02080"/>
<dbReference type="VEuPathDB" id="FungiDB:ASPNIDRAFT2_1141547"/>
<dbReference type="VEuPathDB" id="FungiDB:ATCC64974_1860"/>
<dbReference type="VEuPathDB" id="FungiDB:M747DRAFT_291646"/>
<dbReference type="GO" id="GO:0005576">
    <property type="term" value="C:extracellular region"/>
    <property type="evidence" value="ECO:0007669"/>
    <property type="project" value="UniProtKB-SubCell"/>
</dbReference>
<dbReference type="GO" id="GO:0004180">
    <property type="term" value="F:carboxypeptidase activity"/>
    <property type="evidence" value="ECO:0007669"/>
    <property type="project" value="UniProtKB-KW"/>
</dbReference>
<dbReference type="GO" id="GO:0016810">
    <property type="term" value="F:hydrolase activity, acting on carbon-nitrogen (but not peptide) bonds"/>
    <property type="evidence" value="ECO:0007669"/>
    <property type="project" value="InterPro"/>
</dbReference>
<dbReference type="GO" id="GO:0046872">
    <property type="term" value="F:metal ion binding"/>
    <property type="evidence" value="ECO:0007669"/>
    <property type="project" value="UniProtKB-KW"/>
</dbReference>
<dbReference type="GO" id="GO:0008237">
    <property type="term" value="F:metallopeptidase activity"/>
    <property type="evidence" value="ECO:0007669"/>
    <property type="project" value="UniProtKB-KW"/>
</dbReference>
<dbReference type="GO" id="GO:0006508">
    <property type="term" value="P:proteolysis"/>
    <property type="evidence" value="ECO:0007669"/>
    <property type="project" value="UniProtKB-KW"/>
</dbReference>
<dbReference type="CDD" id="cd01299">
    <property type="entry name" value="Met_dep_hydrolase_A"/>
    <property type="match status" value="1"/>
</dbReference>
<dbReference type="FunFam" id="3.20.20.140:FF:000068">
    <property type="entry name" value="Amidohydrolase"/>
    <property type="match status" value="1"/>
</dbReference>
<dbReference type="Gene3D" id="3.20.20.140">
    <property type="entry name" value="Metal-dependent hydrolases"/>
    <property type="match status" value="1"/>
</dbReference>
<dbReference type="InterPro" id="IPR006680">
    <property type="entry name" value="Amidohydro-rel"/>
</dbReference>
<dbReference type="InterPro" id="IPR011059">
    <property type="entry name" value="Metal-dep_hydrolase_composite"/>
</dbReference>
<dbReference type="InterPro" id="IPR032466">
    <property type="entry name" value="Metal_Hydrolase"/>
</dbReference>
<dbReference type="InterPro" id="IPR051781">
    <property type="entry name" value="Metallo-dep_Hydrolase"/>
</dbReference>
<dbReference type="PANTHER" id="PTHR43135">
    <property type="entry name" value="ALPHA-D-RIBOSE 1-METHYLPHOSPHONATE 5-TRIPHOSPHATE DIPHOSPHATASE"/>
    <property type="match status" value="1"/>
</dbReference>
<dbReference type="PANTHER" id="PTHR43135:SF3">
    <property type="entry name" value="ALPHA-D-RIBOSE 1-METHYLPHOSPHONATE 5-TRIPHOSPHATE DIPHOSPHATASE"/>
    <property type="match status" value="1"/>
</dbReference>
<dbReference type="Pfam" id="PF01979">
    <property type="entry name" value="Amidohydro_1"/>
    <property type="match status" value="1"/>
</dbReference>
<dbReference type="SUPFAM" id="SSF51338">
    <property type="entry name" value="Composite domain of metallo-dependent hydrolases"/>
    <property type="match status" value="2"/>
</dbReference>
<dbReference type="SUPFAM" id="SSF51556">
    <property type="entry name" value="Metallo-dependent hydrolases"/>
    <property type="match status" value="1"/>
</dbReference>
<name>OTASE_ASPNG</name>
<protein>
    <recommendedName>
        <fullName evidence="4">Ochratoxinase</fullName>
        <shortName evidence="4">OTase</shortName>
        <ecNumber evidence="2">3.4.17.-</ecNumber>
    </recommendedName>
    <alternativeName>
        <fullName evidence="4">Amidohydrolase 2</fullName>
        <shortName evidence="4">Amidase 2</shortName>
    </alternativeName>
    <alternativeName>
        <fullName evidence="5">Carboxypeptidase Am2</fullName>
    </alternativeName>
</protein>
<gene>
    <name evidence="4" type="primary">Am2</name>
</gene>
<proteinExistence type="evidence at protein level"/>
<feature type="chain" id="PRO_0000453665" description="Ochratoxinase">
    <location>
        <begin position="1"/>
        <end position="480"/>
    </location>
</feature>
<feature type="active site" evidence="1">
    <location>
        <position position="246"/>
    </location>
</feature>
<feature type="active site" evidence="1">
    <location>
        <position position="378"/>
    </location>
</feature>
<feature type="binding site" evidence="1">
    <location>
        <position position="111"/>
    </location>
    <ligand>
        <name>Zn(2+)</name>
        <dbReference type="ChEBI" id="CHEBI:29105"/>
        <label>1</label>
    </ligand>
</feature>
<feature type="binding site" evidence="1">
    <location>
        <position position="113"/>
    </location>
    <ligand>
        <name>Zn(2+)</name>
        <dbReference type="ChEBI" id="CHEBI:29105"/>
        <label>1</label>
    </ligand>
</feature>
<feature type="binding site" evidence="1">
    <location>
        <position position="246"/>
    </location>
    <ligand>
        <name>Zn(2+)</name>
        <dbReference type="ChEBI" id="CHEBI:29105"/>
        <label>1</label>
    </ligand>
</feature>
<feature type="binding site" evidence="1">
    <location>
        <position position="246"/>
    </location>
    <ligand>
        <name>Zn(2+)</name>
        <dbReference type="ChEBI" id="CHEBI:29105"/>
        <label>2</label>
    </ligand>
</feature>
<feature type="binding site" evidence="1">
    <location>
        <position position="287"/>
    </location>
    <ligand>
        <name>Zn(2+)</name>
        <dbReference type="ChEBI" id="CHEBI:29105"/>
        <label>2</label>
    </ligand>
</feature>
<feature type="binding site" evidence="1">
    <location>
        <position position="307"/>
    </location>
    <ligand>
        <name>Zn(2+)</name>
        <dbReference type="ChEBI" id="CHEBI:29105"/>
        <label>2</label>
    </ligand>
</feature>
<sequence>MVRRIASATPMVQSPMSPLGTTYCVRPNPVSLNLQRRPLVIASTDEAKVTIIYAGLLIPGDGEPLRNAALVISDKIIAFVGSEADIPKKYLRSTQSTHRVPVLMPGLWDCHMHFGGDDDYYNDYTSGLATHPASSGARLARGCWEALQNGYTSYRDLAGYGCEVAKAINDGTIVGPNVYSSGAALSQTAGHGDIFALPAGEVLGSYGVMNPRPGYWGAGPLCIADGVEEVRRAVRLQIRRGAKVIKVMASGGVMSRDDNPNFAQFSPEELKVIVEEAARQNRIVSAHVHGKAGIMAAIKAGCKSLEHVSYADEEVWELMKEKGILYVATRSVIEIFLASNGEGLVKESWAKLQALADSHLKAYQGAIKAGVTIALGTDTAPGGPTALELQFAVERGGMTPLEAIKAATANAPLSVGPQAPLTGQLREGYEADVIALEENPLEDIKVFQEPKAVTHVWKGGKLFKGPGIGPWGEDARNPFL</sequence>
<keyword id="KW-0121">Carboxypeptidase</keyword>
<keyword id="KW-0378">Hydrolase</keyword>
<keyword id="KW-0479">Metal-binding</keyword>
<keyword id="KW-0482">Metalloprotease</keyword>
<keyword id="KW-0645">Protease</keyword>
<keyword id="KW-0964">Secreted</keyword>
<keyword id="KW-0862">Zinc</keyword>
<organism>
    <name type="scientific">Aspergillus niger</name>
    <dbReference type="NCBI Taxonomy" id="5061"/>
    <lineage>
        <taxon>Eukaryota</taxon>
        <taxon>Fungi</taxon>
        <taxon>Dikarya</taxon>
        <taxon>Ascomycota</taxon>
        <taxon>Pezizomycotina</taxon>
        <taxon>Eurotiomycetes</taxon>
        <taxon>Eurotiomycetidae</taxon>
        <taxon>Eurotiales</taxon>
        <taxon>Aspergillaceae</taxon>
        <taxon>Aspergillus</taxon>
        <taxon>Aspergillus subgen. Circumdati</taxon>
    </lineage>
</organism>
<comment type="function">
    <text evidence="2 3">Carboxypeptidase that catalyzes the release of a C-terminal amino acid with specific catalytic activity for aromatic amino acids such as phenylalanine (PubMed:24947135, PubMed:33647354). Is able to degrade ochratoxin A, one of the five major mycotoxins most harmful to humans and animals that is produced by Aspergillus and Penicillium species and occurs in a wide range of agricultural products (PubMed:24947135).</text>
</comment>
<comment type="catalytic activity">
    <reaction evidence="2">
        <text>ochratoxin A + H2O = ochratoxin alpha + L-phenylalanine</text>
        <dbReference type="Rhea" id="RHEA:72751"/>
        <dbReference type="ChEBI" id="CHEBI:15377"/>
        <dbReference type="ChEBI" id="CHEBI:58095"/>
        <dbReference type="ChEBI" id="CHEBI:166829"/>
        <dbReference type="ChEBI" id="CHEBI:192527"/>
    </reaction>
    <physiologicalReaction direction="left-to-right" evidence="2">
        <dbReference type="Rhea" id="RHEA:72752"/>
    </physiologicalReaction>
</comment>
<comment type="cofactor">
    <cofactor evidence="2">
        <name>Zn(2+)</name>
        <dbReference type="ChEBI" id="CHEBI:29105"/>
    </cofactor>
</comment>
<comment type="activity regulation">
    <text evidence="2">The Zn(2+)-specific chelator 1,10-phenanthroline inhibits the enzyme activity.</text>
</comment>
<comment type="biophysicochemical properties">
    <phDependence>
        <text evidence="2">Optimum pH is 6.</text>
    </phDependence>
    <temperatureDependence>
        <text evidence="2">Optimum temperature is 66 degrees Celsius.</text>
    </temperatureDependence>
</comment>
<comment type="subunit">
    <text evidence="2">Homooctamer.</text>
</comment>
<comment type="subcellular location">
    <subcellularLocation>
        <location evidence="2">Secreted</location>
    </subcellularLocation>
</comment>
<comment type="domain">
    <text evidence="2">Each subunit of the homooctameric enzyme folds into a two-domain structure characteristic of a metal dependent amidohydrolase, with a twisted TIM (triosephosphateisomerase)-barrel and a smaller beta-sandwich domain.</text>
</comment>
<comment type="biotechnology">
    <text evidence="2 3">Detoxification of contaminated food is a challenging health issue and ochratoxinase is a promising enzyme that hydrolyzes ochrtoxin A, a mycotoxin demonstrated to have nephrotoxic, immunotoxic, genotoxic, neurotoxic, and teratogenic properties; and that occurs in a wide range of agricultural products (PubMed:24947135). Its carboxypeptidase activity also allows to produce high Fischer ratio (the ratio of moles of branched chain amino acid content to aromatic amino acid content) oligopeptides, a kind of functional oligopeptides that protect the liver, treat phenylketonuria, have anti-fatigue properties, exhibits antioxidant properties, and support anticoagulation of the blood (PubMed:33647354). Producing high Fischer ratio oligopeptides using an enzymatic method is therefore of great health significance and economic benefit (PubMed:33647354).</text>
</comment>
<comment type="similarity">
    <text evidence="6">Belongs to the metallo-dependent hydrolases superfamily. Ochratoxinase amidase 2 family.</text>
</comment>
<reference key="1">
    <citation type="journal article" date="2014" name="Biochem. J.">
        <title>Structural and functional characterization of ochratoxinase, a novel mycotoxin-degrading enzyme.</title>
        <authorList>
            <person name="Dobritzsch D."/>
            <person name="Wang H."/>
            <person name="Schneider G."/>
            <person name="Yu S."/>
        </authorList>
    </citation>
    <scope>NUCLEOTIDE SEQUENCE [GENOMIC DNA]</scope>
    <scope>FUNCTION</scope>
    <scope>SUBCELLULAR LOCATION</scope>
    <scope>CATALYTIC ACTIVITY</scope>
    <scope>BIOPHYSICOCHEMICAL PROPERTIES</scope>
    <scope>SUBUNIT</scope>
    <scope>DOMAIN</scope>
    <scope>COFACTOR</scope>
    <scope>ACTIVE SITE</scope>
    <scope>ACTIVITY REGULATION</scope>
    <scope>BIOTECHNOLOGY</scope>
    <source>
        <strain>UVK143</strain>
    </source>
</reference>
<reference key="2">
    <citation type="journal article" date="2021" name="J. Biotechnol.">
        <title>Engineering a carboxypeptidase from Aspergillus niger M00988 by mutation to increase its ability in high Fischer ratio oligopeptide preparation.</title>
        <authorList>
            <person name="Xiong K."/>
            <person name="Liu J."/>
            <person name="Wang X."/>
            <person name="Sun B."/>
            <person name="Zhang Y."/>
            <person name="Zhao Z."/>
            <person name="Pei P."/>
            <person name="Li X."/>
        </authorList>
    </citation>
    <scope>FUNCTION</scope>
    <scope>CATALYTIC ACTIVITY</scope>
</reference>
<accession>A0A075TJ05</accession>
<evidence type="ECO:0000250" key="1">
    <source>
        <dbReference type="UniProtKB" id="A2R2V4"/>
    </source>
</evidence>
<evidence type="ECO:0000269" key="2">
    <source>
    </source>
</evidence>
<evidence type="ECO:0000269" key="3">
    <source>
    </source>
</evidence>
<evidence type="ECO:0000303" key="4">
    <source>
    </source>
</evidence>
<evidence type="ECO:0000303" key="5">
    <source>
    </source>
</evidence>
<evidence type="ECO:0000305" key="6"/>